<gene>
    <name evidence="1" type="primary">cmoB</name>
    <name type="ordered locus">E2348C_1996</name>
</gene>
<dbReference type="EC" id="2.5.1.-" evidence="1"/>
<dbReference type="EMBL" id="FM180568">
    <property type="protein sequence ID" value="CAS09544.1"/>
    <property type="molecule type" value="Genomic_DNA"/>
</dbReference>
<dbReference type="RefSeq" id="WP_000564725.1">
    <property type="nucleotide sequence ID" value="NC_011601.1"/>
</dbReference>
<dbReference type="SMR" id="B7USP8"/>
<dbReference type="GeneID" id="75171943"/>
<dbReference type="KEGG" id="ecg:E2348C_1996"/>
<dbReference type="HOGENOM" id="CLU_052665_0_0_6"/>
<dbReference type="Proteomes" id="UP000008205">
    <property type="component" value="Chromosome"/>
</dbReference>
<dbReference type="GO" id="GO:0016765">
    <property type="term" value="F:transferase activity, transferring alkyl or aryl (other than methyl) groups"/>
    <property type="evidence" value="ECO:0007669"/>
    <property type="project" value="UniProtKB-UniRule"/>
</dbReference>
<dbReference type="GO" id="GO:0002098">
    <property type="term" value="P:tRNA wobble uridine modification"/>
    <property type="evidence" value="ECO:0007669"/>
    <property type="project" value="InterPro"/>
</dbReference>
<dbReference type="CDD" id="cd02440">
    <property type="entry name" value="AdoMet_MTases"/>
    <property type="match status" value="1"/>
</dbReference>
<dbReference type="FunFam" id="3.40.50.150:FF:000080">
    <property type="entry name" value="tRNA U34 carboxymethyltransferase"/>
    <property type="match status" value="1"/>
</dbReference>
<dbReference type="Gene3D" id="3.40.50.150">
    <property type="entry name" value="Vaccinia Virus protein VP39"/>
    <property type="match status" value="1"/>
</dbReference>
<dbReference type="HAMAP" id="MF_01590">
    <property type="entry name" value="tRNA_carboxymethyltr_CmoB"/>
    <property type="match status" value="1"/>
</dbReference>
<dbReference type="InterPro" id="IPR010017">
    <property type="entry name" value="CmoB"/>
</dbReference>
<dbReference type="InterPro" id="IPR027555">
    <property type="entry name" value="Mo5U34_MeTrfas-like"/>
</dbReference>
<dbReference type="InterPro" id="IPR029063">
    <property type="entry name" value="SAM-dependent_MTases_sf"/>
</dbReference>
<dbReference type="NCBIfam" id="NF011650">
    <property type="entry name" value="PRK15068.1"/>
    <property type="match status" value="1"/>
</dbReference>
<dbReference type="NCBIfam" id="TIGR00452">
    <property type="entry name" value="tRNA 5-methoxyuridine(34)/uridine 5-oxyacetic acid(34) synthase CmoB"/>
    <property type="match status" value="1"/>
</dbReference>
<dbReference type="PANTHER" id="PTHR43861">
    <property type="entry name" value="TRANS-ACONITATE 2-METHYLTRANSFERASE-RELATED"/>
    <property type="match status" value="1"/>
</dbReference>
<dbReference type="Pfam" id="PF08003">
    <property type="entry name" value="Methyltransf_9"/>
    <property type="match status" value="1"/>
</dbReference>
<dbReference type="SUPFAM" id="SSF53335">
    <property type="entry name" value="S-adenosyl-L-methionine-dependent methyltransferases"/>
    <property type="match status" value="1"/>
</dbReference>
<organism>
    <name type="scientific">Escherichia coli O127:H6 (strain E2348/69 / EPEC)</name>
    <dbReference type="NCBI Taxonomy" id="574521"/>
    <lineage>
        <taxon>Bacteria</taxon>
        <taxon>Pseudomonadati</taxon>
        <taxon>Pseudomonadota</taxon>
        <taxon>Gammaproteobacteria</taxon>
        <taxon>Enterobacterales</taxon>
        <taxon>Enterobacteriaceae</taxon>
        <taxon>Escherichia</taxon>
    </lineage>
</organism>
<proteinExistence type="inferred from homology"/>
<protein>
    <recommendedName>
        <fullName evidence="1">tRNA U34 carboxymethyltransferase</fullName>
        <ecNumber evidence="1">2.5.1.-</ecNumber>
    </recommendedName>
</protein>
<name>CMOB_ECO27</name>
<accession>B7USP8</accession>
<sequence length="323" mass="37007">MIDFGNFYSLIAKNHLSHWLETLPAQIANWQREQQHGLFKQWSNAVEFLPEIKPYRLDLLHSVTAESEEPLSAGQIKRIETLMRNLMPWRKGPFSLYGVNIDTEWRSDWKWDRVLPHLSDLTGRTILDVGCGSGYHMWRMIGAGAHLAVGIDPTQLFLCQFEAVRKLLGNDQRAHLLPLGIEQLPALKAFDTVFSMGVLYHRRSPLEHLWQLKDQLVNEGELVLETLVIDGDENTVLVPGDRYAQMRNVYFIPSALALKNWLKKCGFVDIRIADVSVTTTEEQRRTEWMVTESLADFLDPHDPGKTVEGYPAPKRAVLIARKP</sequence>
<keyword id="KW-1185">Reference proteome</keyword>
<keyword id="KW-0808">Transferase</keyword>
<keyword id="KW-0819">tRNA processing</keyword>
<comment type="function">
    <text evidence="1">Catalyzes carboxymethyl transfer from carboxy-S-adenosyl-L-methionine (Cx-SAM) to 5-hydroxyuridine (ho5U) to form 5-carboxymethoxyuridine (cmo5U) at position 34 in tRNAs.</text>
</comment>
<comment type="catalytic activity">
    <reaction evidence="1">
        <text>carboxy-S-adenosyl-L-methionine + 5-hydroxyuridine(34) in tRNA = 5-carboxymethoxyuridine(34) in tRNA + S-adenosyl-L-homocysteine + H(+)</text>
        <dbReference type="Rhea" id="RHEA:52848"/>
        <dbReference type="Rhea" id="RHEA-COMP:13381"/>
        <dbReference type="Rhea" id="RHEA-COMP:13383"/>
        <dbReference type="ChEBI" id="CHEBI:15378"/>
        <dbReference type="ChEBI" id="CHEBI:57856"/>
        <dbReference type="ChEBI" id="CHEBI:134278"/>
        <dbReference type="ChEBI" id="CHEBI:136877"/>
        <dbReference type="ChEBI" id="CHEBI:136879"/>
    </reaction>
</comment>
<comment type="subunit">
    <text evidence="1">Homotetramer.</text>
</comment>
<comment type="similarity">
    <text evidence="1">Belongs to the class I-like SAM-binding methyltransferase superfamily. CmoB family.</text>
</comment>
<feature type="chain" id="PRO_1000185692" description="tRNA U34 carboxymethyltransferase">
    <location>
        <begin position="1"/>
        <end position="323"/>
    </location>
</feature>
<feature type="binding site" evidence="1">
    <location>
        <position position="91"/>
    </location>
    <ligand>
        <name>carboxy-S-adenosyl-L-methionine</name>
        <dbReference type="ChEBI" id="CHEBI:134278"/>
    </ligand>
</feature>
<feature type="binding site" evidence="1">
    <location>
        <position position="105"/>
    </location>
    <ligand>
        <name>carboxy-S-adenosyl-L-methionine</name>
        <dbReference type="ChEBI" id="CHEBI:134278"/>
    </ligand>
</feature>
<feature type="binding site" evidence="1">
    <location>
        <position position="110"/>
    </location>
    <ligand>
        <name>carboxy-S-adenosyl-L-methionine</name>
        <dbReference type="ChEBI" id="CHEBI:134278"/>
    </ligand>
</feature>
<feature type="binding site" evidence="1">
    <location>
        <position position="130"/>
    </location>
    <ligand>
        <name>carboxy-S-adenosyl-L-methionine</name>
        <dbReference type="ChEBI" id="CHEBI:134278"/>
    </ligand>
</feature>
<feature type="binding site" evidence="1">
    <location>
        <begin position="152"/>
        <end position="154"/>
    </location>
    <ligand>
        <name>carboxy-S-adenosyl-L-methionine</name>
        <dbReference type="ChEBI" id="CHEBI:134278"/>
    </ligand>
</feature>
<feature type="binding site" evidence="1">
    <location>
        <begin position="181"/>
        <end position="182"/>
    </location>
    <ligand>
        <name>carboxy-S-adenosyl-L-methionine</name>
        <dbReference type="ChEBI" id="CHEBI:134278"/>
    </ligand>
</feature>
<feature type="binding site" evidence="1">
    <location>
        <position position="196"/>
    </location>
    <ligand>
        <name>carboxy-S-adenosyl-L-methionine</name>
        <dbReference type="ChEBI" id="CHEBI:134278"/>
    </ligand>
</feature>
<feature type="binding site" evidence="1">
    <location>
        <position position="200"/>
    </location>
    <ligand>
        <name>carboxy-S-adenosyl-L-methionine</name>
        <dbReference type="ChEBI" id="CHEBI:134278"/>
    </ligand>
</feature>
<feature type="binding site" evidence="1">
    <location>
        <position position="315"/>
    </location>
    <ligand>
        <name>carboxy-S-adenosyl-L-methionine</name>
        <dbReference type="ChEBI" id="CHEBI:134278"/>
    </ligand>
</feature>
<evidence type="ECO:0000255" key="1">
    <source>
        <dbReference type="HAMAP-Rule" id="MF_01590"/>
    </source>
</evidence>
<reference key="1">
    <citation type="journal article" date="2009" name="J. Bacteriol.">
        <title>Complete genome sequence and comparative genome analysis of enteropathogenic Escherichia coli O127:H6 strain E2348/69.</title>
        <authorList>
            <person name="Iguchi A."/>
            <person name="Thomson N.R."/>
            <person name="Ogura Y."/>
            <person name="Saunders D."/>
            <person name="Ooka T."/>
            <person name="Henderson I.R."/>
            <person name="Harris D."/>
            <person name="Asadulghani M."/>
            <person name="Kurokawa K."/>
            <person name="Dean P."/>
            <person name="Kenny B."/>
            <person name="Quail M.A."/>
            <person name="Thurston S."/>
            <person name="Dougan G."/>
            <person name="Hayashi T."/>
            <person name="Parkhill J."/>
            <person name="Frankel G."/>
        </authorList>
    </citation>
    <scope>NUCLEOTIDE SEQUENCE [LARGE SCALE GENOMIC DNA]</scope>
    <source>
        <strain>E2348/69 / EPEC</strain>
    </source>
</reference>